<gene>
    <name evidence="1" type="primary">dxr</name>
    <name type="ordered locus">Paes_0121</name>
</gene>
<protein>
    <recommendedName>
        <fullName evidence="1">1-deoxy-D-xylulose 5-phosphate reductoisomerase</fullName>
        <shortName evidence="1">DXP reductoisomerase</shortName>
        <ecNumber evidence="1">1.1.1.267</ecNumber>
    </recommendedName>
    <alternativeName>
        <fullName evidence="1">1-deoxyxylulose-5-phosphate reductoisomerase</fullName>
    </alternativeName>
    <alternativeName>
        <fullName evidence="1">2-C-methyl-D-erythritol 4-phosphate synthase</fullName>
    </alternativeName>
</protein>
<reference key="1">
    <citation type="submission" date="2008-06" db="EMBL/GenBank/DDBJ databases">
        <title>Complete sequence of chromosome of Prosthecochloris aestuarii DSM 271.</title>
        <authorList>
            <consortium name="US DOE Joint Genome Institute"/>
            <person name="Lucas S."/>
            <person name="Copeland A."/>
            <person name="Lapidus A."/>
            <person name="Glavina del Rio T."/>
            <person name="Dalin E."/>
            <person name="Tice H."/>
            <person name="Bruce D."/>
            <person name="Goodwin L."/>
            <person name="Pitluck S."/>
            <person name="Schmutz J."/>
            <person name="Larimer F."/>
            <person name="Land M."/>
            <person name="Hauser L."/>
            <person name="Kyrpides N."/>
            <person name="Anderson I."/>
            <person name="Liu Z."/>
            <person name="Li T."/>
            <person name="Zhao F."/>
            <person name="Overmann J."/>
            <person name="Bryant D.A."/>
            <person name="Richardson P."/>
        </authorList>
    </citation>
    <scope>NUCLEOTIDE SEQUENCE [LARGE SCALE GENOMIC DNA]</scope>
    <source>
        <strain>DSM 271 / SK 413</strain>
    </source>
</reference>
<dbReference type="EC" id="1.1.1.267" evidence="1"/>
<dbReference type="EMBL" id="CP001108">
    <property type="protein sequence ID" value="ACF45181.1"/>
    <property type="molecule type" value="Genomic_DNA"/>
</dbReference>
<dbReference type="RefSeq" id="WP_012504718.1">
    <property type="nucleotide sequence ID" value="NC_011059.1"/>
</dbReference>
<dbReference type="SMR" id="B4S387"/>
<dbReference type="STRING" id="290512.Paes_0121"/>
<dbReference type="KEGG" id="paa:Paes_0121"/>
<dbReference type="eggNOG" id="COG0743">
    <property type="taxonomic scope" value="Bacteria"/>
</dbReference>
<dbReference type="HOGENOM" id="CLU_035714_4_0_10"/>
<dbReference type="UniPathway" id="UPA00056">
    <property type="reaction ID" value="UER00092"/>
</dbReference>
<dbReference type="Proteomes" id="UP000002725">
    <property type="component" value="Chromosome"/>
</dbReference>
<dbReference type="GO" id="GO:0030604">
    <property type="term" value="F:1-deoxy-D-xylulose-5-phosphate reductoisomerase activity"/>
    <property type="evidence" value="ECO:0007669"/>
    <property type="project" value="UniProtKB-UniRule"/>
</dbReference>
<dbReference type="GO" id="GO:0030145">
    <property type="term" value="F:manganese ion binding"/>
    <property type="evidence" value="ECO:0007669"/>
    <property type="project" value="TreeGrafter"/>
</dbReference>
<dbReference type="GO" id="GO:0070402">
    <property type="term" value="F:NADPH binding"/>
    <property type="evidence" value="ECO:0007669"/>
    <property type="project" value="InterPro"/>
</dbReference>
<dbReference type="GO" id="GO:0051484">
    <property type="term" value="P:isopentenyl diphosphate biosynthetic process, methylerythritol 4-phosphate pathway involved in terpenoid biosynthetic process"/>
    <property type="evidence" value="ECO:0007669"/>
    <property type="project" value="TreeGrafter"/>
</dbReference>
<dbReference type="FunFam" id="1.10.1740.10:FF:000004">
    <property type="entry name" value="1-deoxy-D-xylulose 5-phosphate reductoisomerase"/>
    <property type="match status" value="1"/>
</dbReference>
<dbReference type="FunFam" id="3.40.50.720:FF:000045">
    <property type="entry name" value="1-deoxy-D-xylulose 5-phosphate reductoisomerase"/>
    <property type="match status" value="1"/>
</dbReference>
<dbReference type="Gene3D" id="1.10.1740.10">
    <property type="match status" value="1"/>
</dbReference>
<dbReference type="Gene3D" id="3.40.50.720">
    <property type="entry name" value="NAD(P)-binding Rossmann-like Domain"/>
    <property type="match status" value="1"/>
</dbReference>
<dbReference type="HAMAP" id="MF_00183">
    <property type="entry name" value="DXP_reductoisom"/>
    <property type="match status" value="1"/>
</dbReference>
<dbReference type="InterPro" id="IPR003821">
    <property type="entry name" value="DXP_reductoisomerase"/>
</dbReference>
<dbReference type="InterPro" id="IPR013644">
    <property type="entry name" value="DXP_reductoisomerase_C"/>
</dbReference>
<dbReference type="InterPro" id="IPR013512">
    <property type="entry name" value="DXP_reductoisomerase_N"/>
</dbReference>
<dbReference type="InterPro" id="IPR026877">
    <property type="entry name" value="DXPR_C"/>
</dbReference>
<dbReference type="InterPro" id="IPR036169">
    <property type="entry name" value="DXPR_C_sf"/>
</dbReference>
<dbReference type="InterPro" id="IPR036291">
    <property type="entry name" value="NAD(P)-bd_dom_sf"/>
</dbReference>
<dbReference type="NCBIfam" id="TIGR00243">
    <property type="entry name" value="Dxr"/>
    <property type="match status" value="1"/>
</dbReference>
<dbReference type="NCBIfam" id="NF009114">
    <property type="entry name" value="PRK12464.1"/>
    <property type="match status" value="1"/>
</dbReference>
<dbReference type="PANTHER" id="PTHR30525">
    <property type="entry name" value="1-DEOXY-D-XYLULOSE 5-PHOSPHATE REDUCTOISOMERASE"/>
    <property type="match status" value="1"/>
</dbReference>
<dbReference type="PANTHER" id="PTHR30525:SF0">
    <property type="entry name" value="1-DEOXY-D-XYLULOSE 5-PHOSPHATE REDUCTOISOMERASE, CHLOROPLASTIC"/>
    <property type="match status" value="1"/>
</dbReference>
<dbReference type="Pfam" id="PF08436">
    <property type="entry name" value="DXP_redisom_C"/>
    <property type="match status" value="1"/>
</dbReference>
<dbReference type="Pfam" id="PF02670">
    <property type="entry name" value="DXP_reductoisom"/>
    <property type="match status" value="1"/>
</dbReference>
<dbReference type="Pfam" id="PF13288">
    <property type="entry name" value="DXPR_C"/>
    <property type="match status" value="1"/>
</dbReference>
<dbReference type="PIRSF" id="PIRSF006205">
    <property type="entry name" value="Dxp_reductismrs"/>
    <property type="match status" value="1"/>
</dbReference>
<dbReference type="SUPFAM" id="SSF69055">
    <property type="entry name" value="1-deoxy-D-xylulose-5-phosphate reductoisomerase, C-terminal domain"/>
    <property type="match status" value="1"/>
</dbReference>
<dbReference type="SUPFAM" id="SSF55347">
    <property type="entry name" value="Glyceraldehyde-3-phosphate dehydrogenase-like, C-terminal domain"/>
    <property type="match status" value="1"/>
</dbReference>
<dbReference type="SUPFAM" id="SSF51735">
    <property type="entry name" value="NAD(P)-binding Rossmann-fold domains"/>
    <property type="match status" value="1"/>
</dbReference>
<keyword id="KW-0414">Isoprene biosynthesis</keyword>
<keyword id="KW-0464">Manganese</keyword>
<keyword id="KW-0479">Metal-binding</keyword>
<keyword id="KW-0521">NADP</keyword>
<keyword id="KW-0560">Oxidoreductase</keyword>
<comment type="function">
    <text evidence="1">Catalyzes the NADPH-dependent rearrangement and reduction of 1-deoxy-D-xylulose-5-phosphate (DXP) to 2-C-methyl-D-erythritol 4-phosphate (MEP).</text>
</comment>
<comment type="catalytic activity">
    <reaction evidence="1">
        <text>2-C-methyl-D-erythritol 4-phosphate + NADP(+) = 1-deoxy-D-xylulose 5-phosphate + NADPH + H(+)</text>
        <dbReference type="Rhea" id="RHEA:13717"/>
        <dbReference type="ChEBI" id="CHEBI:15378"/>
        <dbReference type="ChEBI" id="CHEBI:57783"/>
        <dbReference type="ChEBI" id="CHEBI:57792"/>
        <dbReference type="ChEBI" id="CHEBI:58262"/>
        <dbReference type="ChEBI" id="CHEBI:58349"/>
        <dbReference type="EC" id="1.1.1.267"/>
    </reaction>
    <physiologicalReaction direction="right-to-left" evidence="1">
        <dbReference type="Rhea" id="RHEA:13719"/>
    </physiologicalReaction>
</comment>
<comment type="cofactor">
    <cofactor evidence="1">
        <name>Mg(2+)</name>
        <dbReference type="ChEBI" id="CHEBI:18420"/>
    </cofactor>
    <cofactor evidence="1">
        <name>Mn(2+)</name>
        <dbReference type="ChEBI" id="CHEBI:29035"/>
    </cofactor>
</comment>
<comment type="pathway">
    <text evidence="1">Isoprenoid biosynthesis; isopentenyl diphosphate biosynthesis via DXP pathway; isopentenyl diphosphate from 1-deoxy-D-xylulose 5-phosphate: step 1/6.</text>
</comment>
<comment type="similarity">
    <text evidence="1">Belongs to the DXR family.</text>
</comment>
<feature type="chain" id="PRO_1000098509" description="1-deoxy-D-xylulose 5-phosphate reductoisomerase">
    <location>
        <begin position="1"/>
        <end position="382"/>
    </location>
</feature>
<feature type="binding site" evidence="1">
    <location>
        <position position="10"/>
    </location>
    <ligand>
        <name>NADPH</name>
        <dbReference type="ChEBI" id="CHEBI:57783"/>
    </ligand>
</feature>
<feature type="binding site" evidence="1">
    <location>
        <position position="11"/>
    </location>
    <ligand>
        <name>NADPH</name>
        <dbReference type="ChEBI" id="CHEBI:57783"/>
    </ligand>
</feature>
<feature type="binding site" evidence="1">
    <location>
        <position position="12"/>
    </location>
    <ligand>
        <name>NADPH</name>
        <dbReference type="ChEBI" id="CHEBI:57783"/>
    </ligand>
</feature>
<feature type="binding site" evidence="1">
    <location>
        <position position="13"/>
    </location>
    <ligand>
        <name>NADPH</name>
        <dbReference type="ChEBI" id="CHEBI:57783"/>
    </ligand>
</feature>
<feature type="binding site" evidence="1">
    <location>
        <position position="36"/>
    </location>
    <ligand>
        <name>NADPH</name>
        <dbReference type="ChEBI" id="CHEBI:57783"/>
    </ligand>
</feature>
<feature type="binding site" evidence="1">
    <location>
        <position position="122"/>
    </location>
    <ligand>
        <name>NADPH</name>
        <dbReference type="ChEBI" id="CHEBI:57783"/>
    </ligand>
</feature>
<feature type="binding site" evidence="1">
    <location>
        <position position="123"/>
    </location>
    <ligand>
        <name>1-deoxy-D-xylulose 5-phosphate</name>
        <dbReference type="ChEBI" id="CHEBI:57792"/>
    </ligand>
</feature>
<feature type="binding site" evidence="1">
    <location>
        <position position="124"/>
    </location>
    <ligand>
        <name>NADPH</name>
        <dbReference type="ChEBI" id="CHEBI:57783"/>
    </ligand>
</feature>
<feature type="binding site" evidence="1">
    <location>
        <position position="148"/>
    </location>
    <ligand>
        <name>Mn(2+)</name>
        <dbReference type="ChEBI" id="CHEBI:29035"/>
    </ligand>
</feature>
<feature type="binding site" evidence="1">
    <location>
        <position position="149"/>
    </location>
    <ligand>
        <name>1-deoxy-D-xylulose 5-phosphate</name>
        <dbReference type="ChEBI" id="CHEBI:57792"/>
    </ligand>
</feature>
<feature type="binding site" evidence="1">
    <location>
        <position position="150"/>
    </location>
    <ligand>
        <name>1-deoxy-D-xylulose 5-phosphate</name>
        <dbReference type="ChEBI" id="CHEBI:57792"/>
    </ligand>
</feature>
<feature type="binding site" evidence="1">
    <location>
        <position position="150"/>
    </location>
    <ligand>
        <name>Mn(2+)</name>
        <dbReference type="ChEBI" id="CHEBI:29035"/>
    </ligand>
</feature>
<feature type="binding site" evidence="1">
    <location>
        <position position="174"/>
    </location>
    <ligand>
        <name>1-deoxy-D-xylulose 5-phosphate</name>
        <dbReference type="ChEBI" id="CHEBI:57792"/>
    </ligand>
</feature>
<feature type="binding site" evidence="1">
    <location>
        <position position="197"/>
    </location>
    <ligand>
        <name>1-deoxy-D-xylulose 5-phosphate</name>
        <dbReference type="ChEBI" id="CHEBI:57792"/>
    </ligand>
</feature>
<feature type="binding site" evidence="1">
    <location>
        <position position="203"/>
    </location>
    <ligand>
        <name>NADPH</name>
        <dbReference type="ChEBI" id="CHEBI:57783"/>
    </ligand>
</feature>
<feature type="binding site" evidence="1">
    <location>
        <position position="210"/>
    </location>
    <ligand>
        <name>1-deoxy-D-xylulose 5-phosphate</name>
        <dbReference type="ChEBI" id="CHEBI:57792"/>
    </ligand>
</feature>
<feature type="binding site" evidence="1">
    <location>
        <position position="215"/>
    </location>
    <ligand>
        <name>1-deoxy-D-xylulose 5-phosphate</name>
        <dbReference type="ChEBI" id="CHEBI:57792"/>
    </ligand>
</feature>
<feature type="binding site" evidence="1">
    <location>
        <position position="216"/>
    </location>
    <ligand>
        <name>1-deoxy-D-xylulose 5-phosphate</name>
        <dbReference type="ChEBI" id="CHEBI:57792"/>
    </ligand>
</feature>
<feature type="binding site" evidence="1">
    <location>
        <position position="219"/>
    </location>
    <ligand>
        <name>1-deoxy-D-xylulose 5-phosphate</name>
        <dbReference type="ChEBI" id="CHEBI:57792"/>
    </ligand>
</feature>
<feature type="binding site" evidence="1">
    <location>
        <position position="219"/>
    </location>
    <ligand>
        <name>Mn(2+)</name>
        <dbReference type="ChEBI" id="CHEBI:29035"/>
    </ligand>
</feature>
<sequence length="382" mass="41358">MKSLSILGSTGSIGLSTLDVVRQHPDRFTITGLAEGHDVTLLAEQIREFKPSIVSVRDEASANQLRELIGESGPEIRWGIEGAAVVGEADGSDMVVSAIVGAAGLVPTVRAIKAGKDIALANKETLVVAGQLVSELVREHKVQLLPVDSEHSAIFQSLSGHRTEDIERIILTASGGPFRKTPAEELKLVKPEQALKHPQWSMGAKITIDSATLMNKGLEVIEAHWLFNMPAEKIGVVVHPQSIIHSMVEYIDGCVMAQLGAPDMRAPIAYALSWPERCESGIKKLDLTQIGTLTFEEPDMKRFPALRLAFDALREGRTYPAVLNAANEIAVAAFLNNNIGFTDIPAIVDKTMQAHEALTPVDLDEYLAVDRWARETAAALTL</sequence>
<accession>B4S387</accession>
<evidence type="ECO:0000255" key="1">
    <source>
        <dbReference type="HAMAP-Rule" id="MF_00183"/>
    </source>
</evidence>
<organism>
    <name type="scientific">Prosthecochloris aestuarii (strain DSM 271 / SK 413)</name>
    <dbReference type="NCBI Taxonomy" id="290512"/>
    <lineage>
        <taxon>Bacteria</taxon>
        <taxon>Pseudomonadati</taxon>
        <taxon>Chlorobiota</taxon>
        <taxon>Chlorobiia</taxon>
        <taxon>Chlorobiales</taxon>
        <taxon>Chlorobiaceae</taxon>
        <taxon>Prosthecochloris</taxon>
    </lineage>
</organism>
<proteinExistence type="inferred from homology"/>
<name>DXR_PROA2</name>